<dbReference type="EMBL" id="AF077739">
    <property type="protein sequence ID" value="AAC40201.1"/>
    <property type="molecule type" value="mRNA"/>
</dbReference>
<dbReference type="CCDS" id="CCDS27608.1"/>
<dbReference type="RefSeq" id="NP_031609.1">
    <property type="nucleotide sequence ID" value="NM_007583.2"/>
</dbReference>
<dbReference type="PDB" id="3JXT">
    <property type="method" value="X-ray"/>
    <property type="resolution" value="1.50 A"/>
    <property type="chains" value="C/D=318-323"/>
</dbReference>
<dbReference type="PDB" id="4X3H">
    <property type="method" value="X-ray"/>
    <property type="resolution" value="2.40 A"/>
    <property type="chains" value="B=225-233"/>
</dbReference>
<dbReference type="PDB" id="5KBS">
    <property type="method" value="EM"/>
    <property type="resolution" value="8.70 A"/>
    <property type="chains" value="A/B/C/D=2-208"/>
</dbReference>
<dbReference type="PDB" id="5KBT">
    <property type="method" value="EM"/>
    <property type="resolution" value="6.40 A"/>
    <property type="chains" value="A/B/C/D=2-208"/>
</dbReference>
<dbReference type="PDB" id="5KBU">
    <property type="method" value="EM"/>
    <property type="resolution" value="7.80 A"/>
    <property type="chains" value="A/B/C/D=2-208"/>
</dbReference>
<dbReference type="PDB" id="5WEO">
    <property type="method" value="EM"/>
    <property type="resolution" value="4.20 A"/>
    <property type="chains" value="A/B/C/D=2-208"/>
</dbReference>
<dbReference type="PDB" id="8FP4">
    <property type="method" value="EM"/>
    <property type="resolution" value="2.40 A"/>
    <property type="chains" value="E/F/G/H=1-323"/>
</dbReference>
<dbReference type="PDB" id="8FP9">
    <property type="method" value="EM"/>
    <property type="resolution" value="2.44 A"/>
    <property type="chains" value="E/F/G/H=1-323"/>
</dbReference>
<dbReference type="PDB" id="8FPG">
    <property type="method" value="EM"/>
    <property type="resolution" value="2.32 A"/>
    <property type="chains" value="E/F/G/H=1-323"/>
</dbReference>
<dbReference type="PDB" id="8FPS">
    <property type="method" value="EM"/>
    <property type="resolution" value="2.38 A"/>
    <property type="chains" value="E/F/G/H=1-323"/>
</dbReference>
<dbReference type="PDB" id="8FQ1">
    <property type="method" value="EM"/>
    <property type="resolution" value="5.59 A"/>
    <property type="chains" value="E/F/G/H=1-323"/>
</dbReference>
<dbReference type="PDB" id="8FQ5">
    <property type="method" value="EM"/>
    <property type="resolution" value="2.34 A"/>
    <property type="chains" value="E/F/G/H=1-323"/>
</dbReference>
<dbReference type="PDB" id="8FQB">
    <property type="method" value="EM"/>
    <property type="resolution" value="2.36 A"/>
    <property type="chains" value="E/F/G/H=1-323"/>
</dbReference>
<dbReference type="PDB" id="8FQF">
    <property type="method" value="EM"/>
    <property type="resolution" value="2.29 A"/>
    <property type="chains" value="E/F/G/H=1-323"/>
</dbReference>
<dbReference type="PDB" id="8VHV">
    <property type="method" value="EM"/>
    <property type="resolution" value="2.30 A"/>
    <property type="chains" value="A=1-208"/>
</dbReference>
<dbReference type="PDB" id="9B5Z">
    <property type="method" value="EM"/>
    <property type="resolution" value="2.71 A"/>
    <property type="chains" value="E/F/G/H=1-323"/>
</dbReference>
<dbReference type="PDB" id="9B60">
    <property type="method" value="EM"/>
    <property type="resolution" value="2.57 A"/>
    <property type="chains" value="E/F/G/H=1-323"/>
</dbReference>
<dbReference type="PDB" id="9B61">
    <property type="method" value="EM"/>
    <property type="resolution" value="2.81 A"/>
    <property type="chains" value="E/F/G/H=1-323"/>
</dbReference>
<dbReference type="PDB" id="9B63">
    <property type="method" value="EM"/>
    <property type="resolution" value="2.76 A"/>
    <property type="chains" value="E/F/G/H=1-323"/>
</dbReference>
<dbReference type="PDB" id="9B64">
    <property type="method" value="EM"/>
    <property type="resolution" value="3.56 A"/>
    <property type="chains" value="E/F/G/H=1-323"/>
</dbReference>
<dbReference type="PDB" id="9B67">
    <property type="method" value="EM"/>
    <property type="resolution" value="3.39 A"/>
    <property type="chains" value="E/F/G/H=1-323"/>
</dbReference>
<dbReference type="PDB" id="9B6A">
    <property type="method" value="EM"/>
    <property type="resolution" value="3.35 A"/>
    <property type="chains" value="E/F/G/H=1-323"/>
</dbReference>
<dbReference type="PDBsum" id="3JXT"/>
<dbReference type="PDBsum" id="4X3H"/>
<dbReference type="PDBsum" id="5KBS"/>
<dbReference type="PDBsum" id="5KBT"/>
<dbReference type="PDBsum" id="5KBU"/>
<dbReference type="PDBsum" id="5WEO"/>
<dbReference type="PDBsum" id="8FP4"/>
<dbReference type="PDBsum" id="8FP9"/>
<dbReference type="PDBsum" id="8FPG"/>
<dbReference type="PDBsum" id="8FPS"/>
<dbReference type="PDBsum" id="8FQ1"/>
<dbReference type="PDBsum" id="8FQ5"/>
<dbReference type="PDBsum" id="8FQB"/>
<dbReference type="PDBsum" id="8FQF"/>
<dbReference type="PDBsum" id="8VHV"/>
<dbReference type="PDBsum" id="9B5Z"/>
<dbReference type="PDBsum" id="9B60"/>
<dbReference type="PDBsum" id="9B61"/>
<dbReference type="PDBsum" id="9B63"/>
<dbReference type="PDBsum" id="9B64"/>
<dbReference type="PDBsum" id="9B67"/>
<dbReference type="PDBsum" id="9B6A"/>
<dbReference type="EMDB" id="EMD-29359"/>
<dbReference type="EMDB" id="EMD-29360"/>
<dbReference type="EMDB" id="EMD-29363"/>
<dbReference type="EMDB" id="EMD-29369"/>
<dbReference type="EMDB" id="EMD-29373"/>
<dbReference type="EMDB" id="EMD-29378"/>
<dbReference type="EMDB" id="EMD-29382"/>
<dbReference type="EMDB" id="EMD-29386"/>
<dbReference type="EMDB" id="EMD-43242"/>
<dbReference type="EMDB" id="EMD-44232"/>
<dbReference type="EMDB" id="EMD-44233"/>
<dbReference type="EMDB" id="EMD-44234"/>
<dbReference type="EMDB" id="EMD-44244"/>
<dbReference type="EMDB" id="EMD-44245"/>
<dbReference type="EMDB" id="EMD-44248"/>
<dbReference type="EMDB" id="EMD-44251"/>
<dbReference type="EMDB" id="EMD-8229"/>
<dbReference type="EMDB" id="EMD-8230"/>
<dbReference type="EMDB" id="EMD-8231"/>
<dbReference type="EMDB" id="EMD-8823"/>
<dbReference type="SMR" id="O88602"/>
<dbReference type="BioGRID" id="198444">
    <property type="interactions" value="5"/>
</dbReference>
<dbReference type="DIP" id="DIP-32457N"/>
<dbReference type="ELM" id="O88602"/>
<dbReference type="FunCoup" id="O88602">
    <property type="interactions" value="582"/>
</dbReference>
<dbReference type="IntAct" id="O88602">
    <property type="interactions" value="5"/>
</dbReference>
<dbReference type="MINT" id="O88602"/>
<dbReference type="STRING" id="10090.ENSMUSP00000019290"/>
<dbReference type="GlyCosmos" id="O88602">
    <property type="glycosylation" value="1 site, No reported glycans"/>
</dbReference>
<dbReference type="GlyGen" id="O88602">
    <property type="glycosylation" value="1 site"/>
</dbReference>
<dbReference type="iPTMnet" id="O88602"/>
<dbReference type="PhosphoSitePlus" id="O88602"/>
<dbReference type="SwissPalm" id="O88602"/>
<dbReference type="PaxDb" id="10090-ENSMUSP00000019290"/>
<dbReference type="PeptideAtlas" id="O88602"/>
<dbReference type="ProteomicsDB" id="281326"/>
<dbReference type="ABCD" id="O88602">
    <property type="antibodies" value="2 sequenced antibodies"/>
</dbReference>
<dbReference type="Antibodypedia" id="25748">
    <property type="antibodies" value="239 antibodies from 37 providers"/>
</dbReference>
<dbReference type="DNASU" id="12300"/>
<dbReference type="Ensembl" id="ENSMUST00000019290.3">
    <property type="protein sequence ID" value="ENSMUSP00000019290.3"/>
    <property type="gene ID" value="ENSMUSG00000019146.3"/>
</dbReference>
<dbReference type="GeneID" id="12300"/>
<dbReference type="KEGG" id="mmu:12300"/>
<dbReference type="UCSC" id="uc007wop.2">
    <property type="organism name" value="mouse"/>
</dbReference>
<dbReference type="AGR" id="MGI:1316660"/>
<dbReference type="CTD" id="10369"/>
<dbReference type="MGI" id="MGI:1316660">
    <property type="gene designation" value="Cacng2"/>
</dbReference>
<dbReference type="VEuPathDB" id="HostDB:ENSMUSG00000019146"/>
<dbReference type="eggNOG" id="ENOG502QSNI">
    <property type="taxonomic scope" value="Eukaryota"/>
</dbReference>
<dbReference type="GeneTree" id="ENSGT01050000244893"/>
<dbReference type="HOGENOM" id="CLU_053704_0_1_1"/>
<dbReference type="InParanoid" id="O88602"/>
<dbReference type="OMA" id="PEETDYQ"/>
<dbReference type="OrthoDB" id="9990458at2759"/>
<dbReference type="PhylomeDB" id="O88602"/>
<dbReference type="TreeFam" id="TF327980"/>
<dbReference type="Reactome" id="R-MMU-112308">
    <property type="pathway name" value="Presynaptic depolarization and calcium channel opening"/>
</dbReference>
<dbReference type="Reactome" id="R-MMU-399719">
    <property type="pathway name" value="Trafficking of AMPA receptors"/>
</dbReference>
<dbReference type="Reactome" id="R-MMU-5682910">
    <property type="pathway name" value="LGI-ADAM interactions"/>
</dbReference>
<dbReference type="BioGRID-ORCS" id="12300">
    <property type="hits" value="1 hit in 75 CRISPR screens"/>
</dbReference>
<dbReference type="CD-CODE" id="CE726F99">
    <property type="entry name" value="Postsynaptic density"/>
</dbReference>
<dbReference type="ChiTaRS" id="Cacng2">
    <property type="organism name" value="mouse"/>
</dbReference>
<dbReference type="EvolutionaryTrace" id="O88602"/>
<dbReference type="PRO" id="PR:O88602"/>
<dbReference type="Proteomes" id="UP000000589">
    <property type="component" value="Chromosome 15"/>
</dbReference>
<dbReference type="RNAct" id="O88602">
    <property type="molecule type" value="protein"/>
</dbReference>
<dbReference type="Bgee" id="ENSMUSG00000019146">
    <property type="expression patterns" value="Expressed in ventral horn of spinal cord and 94 other cell types or tissues"/>
</dbReference>
<dbReference type="ExpressionAtlas" id="O88602">
    <property type="expression patterns" value="baseline and differential"/>
</dbReference>
<dbReference type="GO" id="GO:0032281">
    <property type="term" value="C:AMPA glutamate receptor complex"/>
    <property type="evidence" value="ECO:0000314"/>
    <property type="project" value="MGI"/>
</dbReference>
<dbReference type="GO" id="GO:0009986">
    <property type="term" value="C:cell surface"/>
    <property type="evidence" value="ECO:0007669"/>
    <property type="project" value="Ensembl"/>
</dbReference>
<dbReference type="GO" id="GO:0044300">
    <property type="term" value="C:cerebellar mossy fiber"/>
    <property type="evidence" value="ECO:0007669"/>
    <property type="project" value="Ensembl"/>
</dbReference>
<dbReference type="GO" id="GO:0098978">
    <property type="term" value="C:glutamatergic synapse"/>
    <property type="evidence" value="ECO:0000314"/>
    <property type="project" value="SynGO"/>
</dbReference>
<dbReference type="GO" id="GO:0098686">
    <property type="term" value="C:hippocampal mossy fiber to CA3 synapse"/>
    <property type="evidence" value="ECO:0000314"/>
    <property type="project" value="SynGO"/>
</dbReference>
<dbReference type="GO" id="GO:0098839">
    <property type="term" value="C:postsynaptic density membrane"/>
    <property type="evidence" value="ECO:0000314"/>
    <property type="project" value="SynGO"/>
</dbReference>
<dbReference type="GO" id="GO:0098685">
    <property type="term" value="C:Schaffer collateral - CA1 synapse"/>
    <property type="evidence" value="ECO:0000314"/>
    <property type="project" value="SynGO"/>
</dbReference>
<dbReference type="GO" id="GO:0036477">
    <property type="term" value="C:somatodendritic compartment"/>
    <property type="evidence" value="ECO:0000314"/>
    <property type="project" value="UniProtKB"/>
</dbReference>
<dbReference type="GO" id="GO:0005891">
    <property type="term" value="C:voltage-gated calcium channel complex"/>
    <property type="evidence" value="ECO:0007669"/>
    <property type="project" value="InterPro"/>
</dbReference>
<dbReference type="GO" id="GO:0035255">
    <property type="term" value="F:ionotropic glutamate receptor binding"/>
    <property type="evidence" value="ECO:0007669"/>
    <property type="project" value="Ensembl"/>
</dbReference>
<dbReference type="GO" id="GO:0005245">
    <property type="term" value="F:voltage-gated calcium channel activity"/>
    <property type="evidence" value="ECO:0000315"/>
    <property type="project" value="MGI"/>
</dbReference>
<dbReference type="GO" id="GO:0060082">
    <property type="term" value="P:eye blink reflex"/>
    <property type="evidence" value="ECO:0007669"/>
    <property type="project" value="Ensembl"/>
</dbReference>
<dbReference type="GO" id="GO:0051899">
    <property type="term" value="P:membrane depolarization"/>
    <property type="evidence" value="ECO:0000315"/>
    <property type="project" value="MGI"/>
</dbReference>
<dbReference type="GO" id="GO:0060081">
    <property type="term" value="P:membrane hyperpolarization"/>
    <property type="evidence" value="ECO:0000315"/>
    <property type="project" value="MGI"/>
</dbReference>
<dbReference type="GO" id="GO:0050877">
    <property type="term" value="P:nervous system process"/>
    <property type="evidence" value="ECO:0000315"/>
    <property type="project" value="MGI"/>
</dbReference>
<dbReference type="GO" id="GO:0007528">
    <property type="term" value="P:neuromuscular junction development"/>
    <property type="evidence" value="ECO:0000315"/>
    <property type="project" value="MGI"/>
</dbReference>
<dbReference type="GO" id="GO:0099645">
    <property type="term" value="P:neurotransmitter receptor localization to postsynaptic specialization membrane"/>
    <property type="evidence" value="ECO:0000314"/>
    <property type="project" value="SynGO"/>
</dbReference>
<dbReference type="GO" id="GO:1904510">
    <property type="term" value="P:positive regulation of protein localization to basolateral plasma membrane"/>
    <property type="evidence" value="ECO:0007669"/>
    <property type="project" value="Ensembl"/>
</dbReference>
<dbReference type="GO" id="GO:0098970">
    <property type="term" value="P:postsynaptic neurotransmitter receptor diffusion trapping"/>
    <property type="evidence" value="ECO:0000314"/>
    <property type="project" value="SynGO"/>
</dbReference>
<dbReference type="GO" id="GO:0006612">
    <property type="term" value="P:protein targeting to membrane"/>
    <property type="evidence" value="ECO:0007669"/>
    <property type="project" value="Ensembl"/>
</dbReference>
<dbReference type="GO" id="GO:2000311">
    <property type="term" value="P:regulation of AMPA receptor activity"/>
    <property type="evidence" value="ECO:0000250"/>
    <property type="project" value="UniProtKB"/>
</dbReference>
<dbReference type="GO" id="GO:0042391">
    <property type="term" value="P:regulation of membrane potential"/>
    <property type="evidence" value="ECO:0000315"/>
    <property type="project" value="MGI"/>
</dbReference>
<dbReference type="GO" id="GO:0099072">
    <property type="term" value="P:regulation of postsynaptic membrane neurotransmitter receptor levels"/>
    <property type="evidence" value="ECO:0000314"/>
    <property type="project" value="SynGO"/>
</dbReference>
<dbReference type="GO" id="GO:0051592">
    <property type="term" value="P:response to calcium ion"/>
    <property type="evidence" value="ECO:0007669"/>
    <property type="project" value="Ensembl"/>
</dbReference>
<dbReference type="GO" id="GO:0019226">
    <property type="term" value="P:transmission of nerve impulse"/>
    <property type="evidence" value="ECO:0000316"/>
    <property type="project" value="MGI"/>
</dbReference>
<dbReference type="FunFam" id="1.20.140.150:FF:000002">
    <property type="entry name" value="Voltage-dependent calcium channel gamma-2 subunit"/>
    <property type="match status" value="1"/>
</dbReference>
<dbReference type="Gene3D" id="1.20.140.150">
    <property type="match status" value="1"/>
</dbReference>
<dbReference type="InterPro" id="IPR051072">
    <property type="entry name" value="CACNG_subunit"/>
</dbReference>
<dbReference type="InterPro" id="IPR004031">
    <property type="entry name" value="PMP22/EMP/MP20/Claudin"/>
</dbReference>
<dbReference type="InterPro" id="IPR005422">
    <property type="entry name" value="VDCC_g2su"/>
</dbReference>
<dbReference type="InterPro" id="IPR008368">
    <property type="entry name" value="VDCC_gsu"/>
</dbReference>
<dbReference type="PANTHER" id="PTHR12107">
    <property type="entry name" value="VOLTAGE-DEPENDENT CALCIUM CHANNEL GAMMA SUBUNIT"/>
    <property type="match status" value="1"/>
</dbReference>
<dbReference type="PANTHER" id="PTHR12107:SF1">
    <property type="entry name" value="VOLTAGE-DEPENDENT CALCIUM CHANNEL GAMMA-2 SUBUNIT"/>
    <property type="match status" value="1"/>
</dbReference>
<dbReference type="Pfam" id="PF00822">
    <property type="entry name" value="PMP22_Claudin"/>
    <property type="match status" value="1"/>
</dbReference>
<dbReference type="PRINTS" id="PR01792">
    <property type="entry name" value="VDCCGAMMA"/>
</dbReference>
<dbReference type="PRINTS" id="PR01602">
    <property type="entry name" value="VDCCGAMMA2"/>
</dbReference>
<organism>
    <name type="scientific">Mus musculus</name>
    <name type="common">Mouse</name>
    <dbReference type="NCBI Taxonomy" id="10090"/>
    <lineage>
        <taxon>Eukaryota</taxon>
        <taxon>Metazoa</taxon>
        <taxon>Chordata</taxon>
        <taxon>Craniata</taxon>
        <taxon>Vertebrata</taxon>
        <taxon>Euteleostomi</taxon>
        <taxon>Mammalia</taxon>
        <taxon>Eutheria</taxon>
        <taxon>Euarchontoglires</taxon>
        <taxon>Glires</taxon>
        <taxon>Rodentia</taxon>
        <taxon>Myomorpha</taxon>
        <taxon>Muroidea</taxon>
        <taxon>Muridae</taxon>
        <taxon>Murinae</taxon>
        <taxon>Mus</taxon>
        <taxon>Mus</taxon>
    </lineage>
</organism>
<name>CCG2_MOUSE</name>
<accession>O88602</accession>
<comment type="function">
    <text evidence="1 2">Regulates the trafficking and gating properties of AMPA-selective glutamate receptors (AMPARs). Promotes their targeting to the cell membrane and synapses and modulates their gating properties by slowing their rates of activation, deactivation and desensitization. Does not show subunit-specific AMPA receptor regulation and regulates all AMPAR subunits. Thought to stabilize the calcium channel in an inactivated (closed) state (By similarity).</text>
</comment>
<comment type="subunit">
    <text evidence="1 2">The L-type calcium channel is composed of five subunits: alpha-1, alpha-2/delta, beta and gamma. Interacts with the PDZ domains of DLG4/PSD-95 and DLG1/SAP97. May interact with GOPC. Acts as an auxiliary subunit for AMPA-selective glutamate receptors (AMPARs). Found in a complex with GRIA1, GRIA2, GRIA3, GRIA4, CNIH2, CNIH3, CACNG3, CACNG4, CACNG5, CACNG7 and CACNG8. Interacts with GRIA1 and GRIA2 (By similarity). Interacts with MPP2.</text>
</comment>
<comment type="interaction">
    <interactant intactId="EBI-770326">
        <id>O88602</id>
    </interactant>
    <interactant intactId="EBI-445486">
        <id>P23818</id>
        <label>Gria1</label>
    </interactant>
    <organismsDiffer>false</organismsDiffer>
    <experiments>2</experiments>
</comment>
<comment type="subcellular location">
    <subcellularLocation>
        <location>Membrane</location>
        <topology>Multi-pass membrane protein</topology>
    </subcellularLocation>
    <subcellularLocation>
        <location evidence="1">Synapse</location>
        <location evidence="1">Synaptosome</location>
    </subcellularLocation>
</comment>
<comment type="tissue specificity">
    <text>Brain.</text>
</comment>
<comment type="PTM">
    <text evidence="5">Phosphorylation of Thr-321 by PKA impairs interaction with DLG1 and DLG4.</text>
</comment>
<comment type="disease">
    <text evidence="6">Defects in Cacng2 cause the stargazer (stg) phenotype. Stg mice have spike-wave seizures characteristic of absence epilepsy, with accompanying defects in the cerebellum and inner ear.</text>
</comment>
<comment type="similarity">
    <text evidence="7">Belongs to the PMP-22/EMP/MP20 family. CACNG subfamily.</text>
</comment>
<keyword id="KW-0002">3D-structure</keyword>
<keyword id="KW-0106">Calcium</keyword>
<keyword id="KW-0107">Calcium channel</keyword>
<keyword id="KW-0109">Calcium transport</keyword>
<keyword id="KW-0325">Glycoprotein</keyword>
<keyword id="KW-0407">Ion channel</keyword>
<keyword id="KW-0406">Ion transport</keyword>
<keyword id="KW-0472">Membrane</keyword>
<keyword id="KW-0597">Phosphoprotein</keyword>
<keyword id="KW-1185">Reference proteome</keyword>
<keyword id="KW-0770">Synapse</keyword>
<keyword id="KW-0771">Synaptosome</keyword>
<keyword id="KW-0812">Transmembrane</keyword>
<keyword id="KW-1133">Transmembrane helix</keyword>
<keyword id="KW-0813">Transport</keyword>
<keyword id="KW-0851">Voltage-gated channel</keyword>
<gene>
    <name type="primary">Cacng2</name>
    <name type="synonym">Stg</name>
</gene>
<protein>
    <recommendedName>
        <fullName>Voltage-dependent calcium channel gamma-2 subunit</fullName>
    </recommendedName>
    <alternativeName>
        <fullName>Neuronal voltage-gated calcium channel gamma-2 subunit</fullName>
    </alternativeName>
    <alternativeName>
        <fullName>Stargazin</fullName>
    </alternativeName>
    <alternativeName>
        <fullName>Transmembrane AMPAR regulatory protein gamma-2</fullName>
        <shortName>TARP gamma-2</shortName>
    </alternativeName>
</protein>
<evidence type="ECO:0000250" key="1">
    <source>
        <dbReference type="UniProtKB" id="Q71RJ2"/>
    </source>
</evidence>
<evidence type="ECO:0000250" key="2">
    <source>
        <dbReference type="UniProtKB" id="Q9Y698"/>
    </source>
</evidence>
<evidence type="ECO:0000255" key="3"/>
<evidence type="ECO:0000256" key="4">
    <source>
        <dbReference type="SAM" id="MobiDB-lite"/>
    </source>
</evidence>
<evidence type="ECO:0000269" key="5">
    <source>
    </source>
</evidence>
<evidence type="ECO:0000269" key="6">
    <source>
    </source>
</evidence>
<evidence type="ECO:0000305" key="7"/>
<evidence type="ECO:0007744" key="8">
    <source>
    </source>
</evidence>
<evidence type="ECO:0007829" key="9">
    <source>
        <dbReference type="PDB" id="3JXT"/>
    </source>
</evidence>
<evidence type="ECO:0007829" key="10">
    <source>
        <dbReference type="PDB" id="4X3H"/>
    </source>
</evidence>
<evidence type="ECO:0007829" key="11">
    <source>
        <dbReference type="PDB" id="8FPS"/>
    </source>
</evidence>
<evidence type="ECO:0007829" key="12">
    <source>
        <dbReference type="PDB" id="8FQF"/>
    </source>
</evidence>
<sequence length="323" mass="35895">MGLFDRGVQMLLTTVGAFAAFSLMTIAVGTDYWLYSRGVCKTKSVSENETSKKNEEVMTHSGLWRTCCLEGNFKGLCKQIDHFPEDADYEADTAEYFLRAVRASSIFPILSVILLFMGGLCIAASEFYKTRHNIILSAGIFFVSAGLSNIIGIIVYISANAGDPSKSDSKKNSYSYGWSFYFGALSFIIAEMVGVLAVHMFIDRHKQLRATARATDYLQASAITRIPSYRYRYQRRSRSSSRSTEPSHSRDASPVGVKGFNTLPSTEISMYTLSRDPLKAATTPTATYNSDRDNSFLQVHNCIQKDSKDSLHANTANRRTTPV</sequence>
<feature type="chain" id="PRO_0000164674" description="Voltage-dependent calcium channel gamma-2 subunit">
    <location>
        <begin position="1"/>
        <end position="323"/>
    </location>
</feature>
<feature type="transmembrane region" description="Helical" evidence="3">
    <location>
        <begin position="10"/>
        <end position="30"/>
    </location>
</feature>
<feature type="transmembrane region" description="Helical" evidence="3">
    <location>
        <begin position="104"/>
        <end position="124"/>
    </location>
</feature>
<feature type="transmembrane region" description="Helical" evidence="3">
    <location>
        <begin position="134"/>
        <end position="154"/>
    </location>
</feature>
<feature type="transmembrane region" description="Helical" evidence="3">
    <location>
        <begin position="182"/>
        <end position="202"/>
    </location>
</feature>
<feature type="region of interest" description="Disordered" evidence="4">
    <location>
        <begin position="233"/>
        <end position="261"/>
    </location>
</feature>
<feature type="modified residue" description="Phosphoserine" evidence="1">
    <location>
        <position position="253"/>
    </location>
</feature>
<feature type="modified residue" description="Phosphotyrosine" evidence="8">
    <location>
        <position position="271"/>
    </location>
</feature>
<feature type="modified residue" description="Phosphothreonine; by PKA" evidence="5">
    <location>
        <position position="321"/>
    </location>
</feature>
<feature type="glycosylation site" description="N-linked (GlcNAc...) asparagine" evidence="3">
    <location>
        <position position="48"/>
    </location>
</feature>
<feature type="mutagenesis site" description="Abolishes phosphorylation." evidence="5">
    <original>T</original>
    <variation>A</variation>
    <location>
        <position position="321"/>
    </location>
</feature>
<feature type="mutagenesis site" description="No interaction with DLG1 and DLG4." evidence="5">
    <original>T</original>
    <variation>D</variation>
    <variation>E</variation>
    <location>
        <position position="321"/>
    </location>
</feature>
<feature type="mutagenesis site" description="No interaction with DLG1 and DLG4." evidence="5">
    <original>V</original>
    <variation>A</variation>
    <location>
        <position position="323"/>
    </location>
</feature>
<feature type="helix" evidence="12">
    <location>
        <begin position="6"/>
        <end position="29"/>
    </location>
</feature>
<feature type="strand" evidence="12">
    <location>
        <begin position="33"/>
        <end position="38"/>
    </location>
</feature>
<feature type="strand" evidence="12">
    <location>
        <begin position="57"/>
        <end position="61"/>
    </location>
</feature>
<feature type="strand" evidence="12">
    <location>
        <begin position="63"/>
        <end position="68"/>
    </location>
</feature>
<feature type="turn" evidence="12">
    <location>
        <begin position="72"/>
        <end position="75"/>
    </location>
</feature>
<feature type="strand" evidence="12">
    <location>
        <begin position="77"/>
        <end position="79"/>
    </location>
</feature>
<feature type="strand" evidence="12">
    <location>
        <begin position="85"/>
        <end position="88"/>
    </location>
</feature>
<feature type="helix" evidence="12">
    <location>
        <begin position="93"/>
        <end position="104"/>
    </location>
</feature>
<feature type="helix" evidence="12">
    <location>
        <begin position="106"/>
        <end position="126"/>
    </location>
</feature>
<feature type="helix" evidence="12">
    <location>
        <begin position="133"/>
        <end position="160"/>
    </location>
</feature>
<feature type="strand" evidence="11">
    <location>
        <begin position="174"/>
        <end position="176"/>
    </location>
</feature>
<feature type="helix" evidence="12">
    <location>
        <begin position="178"/>
        <end position="213"/>
    </location>
</feature>
<feature type="strand" evidence="10">
    <location>
        <begin position="226"/>
        <end position="229"/>
    </location>
</feature>
<feature type="strand" evidence="9">
    <location>
        <begin position="321"/>
        <end position="323"/>
    </location>
</feature>
<reference key="1">
    <citation type="journal article" date="1998" name="Nat. Genet.">
        <title>The mouse stargazer gene encodes a neuronal Ca2+-channel gamma subunit.</title>
        <authorList>
            <person name="Letts V.A."/>
            <person name="Felix R."/>
            <person name="Biddlecome G.H."/>
            <person name="Arikkath J."/>
            <person name="Mahaffey C.L."/>
            <person name="Valenzuela A."/>
            <person name="Bartlett F.S. II"/>
            <person name="Mori Y."/>
            <person name="Campbell K.P."/>
            <person name="Frankel W.N."/>
        </authorList>
    </citation>
    <scope>NUCLEOTIDE SEQUENCE [MRNA]</scope>
    <scope>DISEASE</scope>
    <source>
        <strain>ICR</strain>
        <tissue>Brain</tissue>
    </source>
</reference>
<reference key="2">
    <citation type="journal article" date="2002" name="J. Biol. Chem.">
        <title>Phosphorylation of stargazin by protein kinase A regulates its interaction with PSD-95.</title>
        <authorList>
            <person name="Choi J."/>
            <person name="Ko J."/>
            <person name="Park E."/>
            <person name="Lee J.-R."/>
            <person name="Yoon J."/>
            <person name="Lim S."/>
            <person name="Kim E."/>
        </authorList>
    </citation>
    <scope>PHOSPHORYLATION AT THR-321</scope>
    <scope>INTERACTION WITH DLG1 AND DLG4</scope>
    <scope>MUTAGENESIS OF THR-321 AND VAL-323</scope>
</reference>
<reference key="3">
    <citation type="journal article" date="2004" name="J. Biol. Chem.">
        <title>Microtubule-associated protein light chain 2 is a stargazin-AMPA receptor complex-interacting protein in vivo.</title>
        <authorList>
            <person name="Ives J.H."/>
            <person name="Fung S."/>
            <person name="Tiwari P."/>
            <person name="Payne H.L."/>
            <person name="Thompson C.L."/>
        </authorList>
    </citation>
    <scope>INTERACTION WITH GOPC</scope>
</reference>
<reference key="4">
    <citation type="journal article" date="2008" name="J. Proteome Res.">
        <title>Large-scale identification and evolution indexing of tyrosine phosphorylation sites from murine brain.</title>
        <authorList>
            <person name="Ballif B.A."/>
            <person name="Carey G.R."/>
            <person name="Sunyaev S.R."/>
            <person name="Gygi S.P."/>
        </authorList>
    </citation>
    <scope>PHOSPHORYLATION [LARGE SCALE ANALYSIS] AT TYR-271</scope>
    <scope>IDENTIFICATION BY MASS SPECTROMETRY [LARGE SCALE ANALYSIS]</scope>
    <source>
        <tissue>Brain</tissue>
    </source>
</reference>
<reference key="5">
    <citation type="journal article" date="2010" name="Cell">
        <title>A tissue-specific atlas of mouse protein phosphorylation and expression.</title>
        <authorList>
            <person name="Huttlin E.L."/>
            <person name="Jedrychowski M.P."/>
            <person name="Elias J.E."/>
            <person name="Goswami T."/>
            <person name="Rad R."/>
            <person name="Beausoleil S.A."/>
            <person name="Villen J."/>
            <person name="Haas W."/>
            <person name="Sowa M.E."/>
            <person name="Gygi S.P."/>
        </authorList>
    </citation>
    <scope>IDENTIFICATION BY MASS SPECTROMETRY [LARGE SCALE ANALYSIS]</scope>
    <source>
        <tissue>Brain</tissue>
    </source>
</reference>
<proteinExistence type="evidence at protein level"/>